<feature type="signal peptide" evidence="2">
    <location>
        <begin position="1"/>
        <end position="25"/>
    </location>
</feature>
<feature type="chain" id="PRO_0000428299" description="Trehalose-binding lipoprotein LpqY">
    <location>
        <begin position="26"/>
        <end position="468"/>
    </location>
</feature>
<feature type="binding site" evidence="1">
    <location>
        <position position="97"/>
    </location>
    <ligand>
        <name>alpha,alpha-trehalose</name>
        <dbReference type="ChEBI" id="CHEBI:16551"/>
    </ligand>
</feature>
<feature type="binding site" evidence="1">
    <location>
        <position position="151"/>
    </location>
    <ligand>
        <name>alpha,alpha-trehalose</name>
        <dbReference type="ChEBI" id="CHEBI:16551"/>
    </ligand>
</feature>
<feature type="binding site" evidence="1">
    <location>
        <position position="276"/>
    </location>
    <ligand>
        <name>alpha,alpha-trehalose</name>
        <dbReference type="ChEBI" id="CHEBI:16551"/>
    </ligand>
</feature>
<feature type="binding site" evidence="1">
    <location>
        <position position="278"/>
    </location>
    <ligand>
        <name>alpha,alpha-trehalose</name>
        <dbReference type="ChEBI" id="CHEBI:16551"/>
    </ligand>
</feature>
<feature type="binding site" evidence="1">
    <location>
        <position position="351"/>
    </location>
    <ligand>
        <name>alpha,alpha-trehalose</name>
        <dbReference type="ChEBI" id="CHEBI:16551"/>
    </ligand>
</feature>
<feature type="binding site" evidence="1">
    <location>
        <position position="421"/>
    </location>
    <ligand>
        <name>alpha,alpha-trehalose</name>
        <dbReference type="ChEBI" id="CHEBI:16551"/>
    </ligand>
</feature>
<feature type="lipid moiety-binding region" description="N-palmitoyl cysteine" evidence="2">
    <location>
        <position position="26"/>
    </location>
</feature>
<feature type="lipid moiety-binding region" description="S-diacylglycerol cysteine" evidence="2">
    <location>
        <position position="26"/>
    </location>
</feature>
<feature type="disulfide bond" evidence="1">
    <location>
        <begin position="54"/>
        <end position="372"/>
    </location>
</feature>
<sequence>MVMSRGRIPRLGAAVLVALTTAAAACGADSQGLVVSFYTPATDGATFTAIAQRCNQQFGGRFTIAQVSLPRSPNEQRLQLARRLTGNDRTLDVMALDVVWTAEFAEAGWALPLSDDPAGLAENDAVADTLPGPLATAGWNHKLYAAPVTTNTQLLWYRPDLVNSPPTDWNAMIAEAARLHAAGEPSWIAVQANQGEGLVVWFNTLLVSAGGSVLSEDGRHVTLTDTPAHRAATVSALQILKSVATTPGADPSITRTEEGSARLAFEQGKAALEVNWPFVFASMLENAVKGGVPFLPLNRIPQLAGSINDIGTFTPSDEQFRIAYDASQQVFGFAPYPAVAPGQPAKVTIGGLNLAVAKTTRHRAEAFEAVRCLRDQHNQRYVSLEGGLPAVRASLYSDPQFQAKYPMHAIIRQQLTDAAVRPATPVYQALSIRLAAVLSPITEIDPESTADELAAQAQKAIDGMGLLP</sequence>
<organism>
    <name type="scientific">Mycobacterium tuberculosis (strain CDC 1551 / Oshkosh)</name>
    <dbReference type="NCBI Taxonomy" id="83331"/>
    <lineage>
        <taxon>Bacteria</taxon>
        <taxon>Bacillati</taxon>
        <taxon>Actinomycetota</taxon>
        <taxon>Actinomycetes</taxon>
        <taxon>Mycobacteriales</taxon>
        <taxon>Mycobacteriaceae</taxon>
        <taxon>Mycobacterium</taxon>
        <taxon>Mycobacterium tuberculosis complex</taxon>
    </lineage>
</organism>
<comment type="function">
    <text evidence="1">Part of the ABC transporter complex LpqY-SugA-SugB-SugC, which is highly specific for uptake of trehalose. Involved in the recycling of extracellular trehalose released from trehalose-containing molecules synthesized by M.tuberculosis. Trehalose uptake is essential for virulence.</text>
</comment>
<comment type="subunit">
    <text evidence="1">Monomer. The complex is composed of two ATP-binding proteins (SugC), two transmembrane proteins (SugA and SugB) and a solute-binding protein (LpqY).</text>
</comment>
<comment type="subcellular location">
    <subcellularLocation>
        <location evidence="3">Cell inner membrane</location>
        <topology evidence="2">Lipid-anchor</topology>
        <orientation evidence="1">Periplasmic side</orientation>
    </subcellularLocation>
</comment>
<comment type="similarity">
    <text evidence="3">Belongs to the bacterial solute-binding protein 1 family.</text>
</comment>
<gene>
    <name type="primary">lpqY</name>
    <name type="ordered locus">MT1273</name>
</gene>
<evidence type="ECO:0000250" key="1">
    <source>
        <dbReference type="UniProtKB" id="P9WGU9"/>
    </source>
</evidence>
<evidence type="ECO:0000255" key="2">
    <source>
        <dbReference type="PROSITE-ProRule" id="PRU00303"/>
    </source>
</evidence>
<evidence type="ECO:0000305" key="3"/>
<proteinExistence type="inferred from homology"/>
<dbReference type="EMBL" id="AE000516">
    <property type="protein sequence ID" value="AAK45531.1"/>
    <property type="molecule type" value="Genomic_DNA"/>
</dbReference>
<dbReference type="RefSeq" id="WP_003898783.1">
    <property type="nucleotide sequence ID" value="NZ_KK341227.1"/>
</dbReference>
<dbReference type="SMR" id="P9WGU8"/>
<dbReference type="GeneID" id="45425205"/>
<dbReference type="KEGG" id="mtc:MT1273"/>
<dbReference type="PATRIC" id="fig|83331.31.peg.1376"/>
<dbReference type="HOGENOM" id="CLU_031285_9_1_11"/>
<dbReference type="Proteomes" id="UP000001020">
    <property type="component" value="Chromosome"/>
</dbReference>
<dbReference type="GO" id="GO:0043190">
    <property type="term" value="C:ATP-binding cassette (ABC) transporter complex"/>
    <property type="evidence" value="ECO:0000250"/>
    <property type="project" value="UniProtKB"/>
</dbReference>
<dbReference type="GO" id="GO:0055052">
    <property type="term" value="C:ATP-binding cassette (ABC) transporter complex, substrate-binding subunit-containing"/>
    <property type="evidence" value="ECO:0007669"/>
    <property type="project" value="TreeGrafter"/>
</dbReference>
<dbReference type="GO" id="GO:0042597">
    <property type="term" value="C:periplasmic space"/>
    <property type="evidence" value="ECO:0000250"/>
    <property type="project" value="UniProtKB"/>
</dbReference>
<dbReference type="GO" id="GO:1901982">
    <property type="term" value="F:maltose binding"/>
    <property type="evidence" value="ECO:0007669"/>
    <property type="project" value="TreeGrafter"/>
</dbReference>
<dbReference type="GO" id="GO:0015574">
    <property type="term" value="F:trehalose transmembrane transporter activity"/>
    <property type="evidence" value="ECO:0000250"/>
    <property type="project" value="UniProtKB"/>
</dbReference>
<dbReference type="GO" id="GO:0042956">
    <property type="term" value="P:maltodextrin transmembrane transport"/>
    <property type="evidence" value="ECO:0007669"/>
    <property type="project" value="TreeGrafter"/>
</dbReference>
<dbReference type="GO" id="GO:0015768">
    <property type="term" value="P:maltose transport"/>
    <property type="evidence" value="ECO:0007669"/>
    <property type="project" value="TreeGrafter"/>
</dbReference>
<dbReference type="FunFam" id="3.40.190.10:FF:000279">
    <property type="entry name" value="PROBABLE SUGAR-BINDING LIPOPROTEIN LPQY"/>
    <property type="match status" value="1"/>
</dbReference>
<dbReference type="Gene3D" id="3.40.190.10">
    <property type="entry name" value="Periplasmic binding protein-like II"/>
    <property type="match status" value="4"/>
</dbReference>
<dbReference type="InterPro" id="IPR006059">
    <property type="entry name" value="SBP"/>
</dbReference>
<dbReference type="PANTHER" id="PTHR30061">
    <property type="entry name" value="MALTOSE-BINDING PERIPLASMIC PROTEIN"/>
    <property type="match status" value="1"/>
</dbReference>
<dbReference type="PANTHER" id="PTHR30061:SF50">
    <property type="entry name" value="MALTOSE_MALTODEXTRIN-BINDING PERIPLASMIC PROTEIN"/>
    <property type="match status" value="1"/>
</dbReference>
<dbReference type="Pfam" id="PF01547">
    <property type="entry name" value="SBP_bac_1"/>
    <property type="match status" value="1"/>
</dbReference>
<dbReference type="SUPFAM" id="SSF53850">
    <property type="entry name" value="Periplasmic binding protein-like II"/>
    <property type="match status" value="1"/>
</dbReference>
<dbReference type="PROSITE" id="PS51257">
    <property type="entry name" value="PROKAR_LIPOPROTEIN"/>
    <property type="match status" value="1"/>
</dbReference>
<name>LPQY_MYCTO</name>
<protein>
    <recommendedName>
        <fullName evidence="3">Trehalose-binding lipoprotein LpqY</fullName>
    </recommendedName>
    <alternativeName>
        <fullName evidence="3">SugABC transporter substrate-binding protein LpqY</fullName>
        <shortName evidence="3">SugABC transporter SBP LpqY</shortName>
    </alternativeName>
</protein>
<reference key="1">
    <citation type="journal article" date="2002" name="J. Bacteriol.">
        <title>Whole-genome comparison of Mycobacterium tuberculosis clinical and laboratory strains.</title>
        <authorList>
            <person name="Fleischmann R.D."/>
            <person name="Alland D."/>
            <person name="Eisen J.A."/>
            <person name="Carpenter L."/>
            <person name="White O."/>
            <person name="Peterson J.D."/>
            <person name="DeBoy R.T."/>
            <person name="Dodson R.J."/>
            <person name="Gwinn M.L."/>
            <person name="Haft D.H."/>
            <person name="Hickey E.K."/>
            <person name="Kolonay J.F."/>
            <person name="Nelson W.C."/>
            <person name="Umayam L.A."/>
            <person name="Ermolaeva M.D."/>
            <person name="Salzberg S.L."/>
            <person name="Delcher A."/>
            <person name="Utterback T.R."/>
            <person name="Weidman J.F."/>
            <person name="Khouri H.M."/>
            <person name="Gill J."/>
            <person name="Mikula A."/>
            <person name="Bishai W."/>
            <person name="Jacobs W.R. Jr."/>
            <person name="Venter J.C."/>
            <person name="Fraser C.M."/>
        </authorList>
    </citation>
    <scope>NUCLEOTIDE SEQUENCE [LARGE SCALE GENOMIC DNA]</scope>
    <source>
        <strain>CDC 1551 / Oshkosh</strain>
    </source>
</reference>
<keyword id="KW-0997">Cell inner membrane</keyword>
<keyword id="KW-1003">Cell membrane</keyword>
<keyword id="KW-1015">Disulfide bond</keyword>
<keyword id="KW-0449">Lipoprotein</keyword>
<keyword id="KW-0472">Membrane</keyword>
<keyword id="KW-0564">Palmitate</keyword>
<keyword id="KW-1185">Reference proteome</keyword>
<keyword id="KW-0732">Signal</keyword>
<keyword id="KW-0762">Sugar transport</keyword>
<keyword id="KW-0813">Transport</keyword>
<accession>P9WGU8</accession>
<accession>F2GFS7</accession>
<accession>L0T620</accession>
<accession>Q7ARU8</accession>
<accession>Q7D8J9</accession>